<proteinExistence type="inferred from homology"/>
<organism>
    <name type="scientific">Chlamydia trachomatis serovar D (strain ATCC VR-885 / DSM 19411 / UW-3/Cx)</name>
    <dbReference type="NCBI Taxonomy" id="272561"/>
    <lineage>
        <taxon>Bacteria</taxon>
        <taxon>Pseudomonadati</taxon>
        <taxon>Chlamydiota</taxon>
        <taxon>Chlamydiia</taxon>
        <taxon>Chlamydiales</taxon>
        <taxon>Chlamydiaceae</taxon>
        <taxon>Chlamydia/Chlamydophila group</taxon>
        <taxon>Chlamydia</taxon>
    </lineage>
</organism>
<keyword id="KW-0067">ATP-binding</keyword>
<keyword id="KW-0131">Cell cycle</keyword>
<keyword id="KW-0132">Cell division</keyword>
<keyword id="KW-0133">Cell shape</keyword>
<keyword id="KW-0961">Cell wall biogenesis/degradation</keyword>
<keyword id="KW-0963">Cytoplasm</keyword>
<keyword id="KW-0436">Ligase</keyword>
<keyword id="KW-0547">Nucleotide-binding</keyword>
<keyword id="KW-0573">Peptidoglycan synthesis</keyword>
<keyword id="KW-1185">Reference proteome</keyword>
<dbReference type="EC" id="6.3.2.9" evidence="1"/>
<dbReference type="EMBL" id="AE001273">
    <property type="protein sequence ID" value="AAC68353.1"/>
    <property type="molecule type" value="Genomic_DNA"/>
</dbReference>
<dbReference type="PIR" id="E71474">
    <property type="entry name" value="E71474"/>
</dbReference>
<dbReference type="RefSeq" id="NP_220277.1">
    <property type="nucleotide sequence ID" value="NC_000117.1"/>
</dbReference>
<dbReference type="RefSeq" id="WP_009872138.1">
    <property type="nucleotide sequence ID" value="NC_000117.1"/>
</dbReference>
<dbReference type="SMR" id="O84763"/>
<dbReference type="FunCoup" id="O84763">
    <property type="interactions" value="202"/>
</dbReference>
<dbReference type="STRING" id="272561.CT_758"/>
<dbReference type="EnsemblBacteria" id="AAC68353">
    <property type="protein sequence ID" value="AAC68353"/>
    <property type="gene ID" value="CT_758"/>
</dbReference>
<dbReference type="GeneID" id="884569"/>
<dbReference type="KEGG" id="ctr:CT_758"/>
<dbReference type="PATRIC" id="fig|272561.5.peg.833"/>
<dbReference type="HOGENOM" id="CLU_032540_0_0_0"/>
<dbReference type="InParanoid" id="O84763"/>
<dbReference type="OrthoDB" id="9809796at2"/>
<dbReference type="UniPathway" id="UPA00219"/>
<dbReference type="Proteomes" id="UP000000431">
    <property type="component" value="Chromosome"/>
</dbReference>
<dbReference type="GO" id="GO:0005737">
    <property type="term" value="C:cytoplasm"/>
    <property type="evidence" value="ECO:0007669"/>
    <property type="project" value="UniProtKB-SubCell"/>
</dbReference>
<dbReference type="GO" id="GO:0005524">
    <property type="term" value="F:ATP binding"/>
    <property type="evidence" value="ECO:0007669"/>
    <property type="project" value="UniProtKB-UniRule"/>
</dbReference>
<dbReference type="GO" id="GO:0008764">
    <property type="term" value="F:UDP-N-acetylmuramoylalanine-D-glutamate ligase activity"/>
    <property type="evidence" value="ECO:0007669"/>
    <property type="project" value="UniProtKB-UniRule"/>
</dbReference>
<dbReference type="GO" id="GO:0051301">
    <property type="term" value="P:cell division"/>
    <property type="evidence" value="ECO:0007669"/>
    <property type="project" value="UniProtKB-KW"/>
</dbReference>
<dbReference type="GO" id="GO:0071555">
    <property type="term" value="P:cell wall organization"/>
    <property type="evidence" value="ECO:0007669"/>
    <property type="project" value="UniProtKB-KW"/>
</dbReference>
<dbReference type="GO" id="GO:0009252">
    <property type="term" value="P:peptidoglycan biosynthetic process"/>
    <property type="evidence" value="ECO:0007669"/>
    <property type="project" value="UniProtKB-UniRule"/>
</dbReference>
<dbReference type="GO" id="GO:0008360">
    <property type="term" value="P:regulation of cell shape"/>
    <property type="evidence" value="ECO:0007669"/>
    <property type="project" value="UniProtKB-KW"/>
</dbReference>
<dbReference type="Gene3D" id="3.90.190.20">
    <property type="entry name" value="Mur ligase, C-terminal domain"/>
    <property type="match status" value="1"/>
</dbReference>
<dbReference type="Gene3D" id="3.40.1190.10">
    <property type="entry name" value="Mur-like, catalytic domain"/>
    <property type="match status" value="1"/>
</dbReference>
<dbReference type="Gene3D" id="3.40.50.720">
    <property type="entry name" value="NAD(P)-binding Rossmann-like Domain"/>
    <property type="match status" value="1"/>
</dbReference>
<dbReference type="HAMAP" id="MF_00639">
    <property type="entry name" value="MurD"/>
    <property type="match status" value="1"/>
</dbReference>
<dbReference type="InterPro" id="IPR036565">
    <property type="entry name" value="Mur-like_cat_sf"/>
</dbReference>
<dbReference type="InterPro" id="IPR004101">
    <property type="entry name" value="Mur_ligase_C"/>
</dbReference>
<dbReference type="InterPro" id="IPR036615">
    <property type="entry name" value="Mur_ligase_C_dom_sf"/>
</dbReference>
<dbReference type="InterPro" id="IPR013221">
    <property type="entry name" value="Mur_ligase_cen"/>
</dbReference>
<dbReference type="InterPro" id="IPR005762">
    <property type="entry name" value="MurD"/>
</dbReference>
<dbReference type="NCBIfam" id="TIGR01087">
    <property type="entry name" value="murD"/>
    <property type="match status" value="1"/>
</dbReference>
<dbReference type="PANTHER" id="PTHR43692">
    <property type="entry name" value="UDP-N-ACETYLMURAMOYLALANINE--D-GLUTAMATE LIGASE"/>
    <property type="match status" value="1"/>
</dbReference>
<dbReference type="PANTHER" id="PTHR43692:SF1">
    <property type="entry name" value="UDP-N-ACETYLMURAMOYLALANINE--D-GLUTAMATE LIGASE"/>
    <property type="match status" value="1"/>
</dbReference>
<dbReference type="Pfam" id="PF02875">
    <property type="entry name" value="Mur_ligase_C"/>
    <property type="match status" value="1"/>
</dbReference>
<dbReference type="Pfam" id="PF08245">
    <property type="entry name" value="Mur_ligase_M"/>
    <property type="match status" value="1"/>
</dbReference>
<dbReference type="Pfam" id="PF21799">
    <property type="entry name" value="MurD-like_N"/>
    <property type="match status" value="1"/>
</dbReference>
<dbReference type="SUPFAM" id="SSF51984">
    <property type="entry name" value="MurCD N-terminal domain"/>
    <property type="match status" value="1"/>
</dbReference>
<dbReference type="SUPFAM" id="SSF53623">
    <property type="entry name" value="MurD-like peptide ligases, catalytic domain"/>
    <property type="match status" value="1"/>
</dbReference>
<dbReference type="SUPFAM" id="SSF53244">
    <property type="entry name" value="MurD-like peptide ligases, peptide-binding domain"/>
    <property type="match status" value="1"/>
</dbReference>
<accession>O84763</accession>
<comment type="function">
    <text evidence="1">Cell wall formation. Catalyzes the addition of glutamate to the nucleotide precursor UDP-N-acetylmuramoyl-L-alanine (UMA).</text>
</comment>
<comment type="catalytic activity">
    <reaction evidence="1">
        <text>UDP-N-acetyl-alpha-D-muramoyl-L-alanine + D-glutamate + ATP = UDP-N-acetyl-alpha-D-muramoyl-L-alanyl-D-glutamate + ADP + phosphate + H(+)</text>
        <dbReference type="Rhea" id="RHEA:16429"/>
        <dbReference type="ChEBI" id="CHEBI:15378"/>
        <dbReference type="ChEBI" id="CHEBI:29986"/>
        <dbReference type="ChEBI" id="CHEBI:30616"/>
        <dbReference type="ChEBI" id="CHEBI:43474"/>
        <dbReference type="ChEBI" id="CHEBI:83898"/>
        <dbReference type="ChEBI" id="CHEBI:83900"/>
        <dbReference type="ChEBI" id="CHEBI:456216"/>
        <dbReference type="EC" id="6.3.2.9"/>
    </reaction>
</comment>
<comment type="pathway">
    <text evidence="1">Cell wall biogenesis; peptidoglycan biosynthesis.</text>
</comment>
<comment type="subcellular location">
    <subcellularLocation>
        <location evidence="1">Cytoplasm</location>
    </subcellularLocation>
</comment>
<comment type="similarity">
    <text evidence="1">Belongs to the MurCDEF family.</text>
</comment>
<gene>
    <name evidence="1" type="primary">murD</name>
    <name type="ordered locus">CT_758</name>
</gene>
<feature type="chain" id="PRO_0000108994" description="UDP-N-acetylmuramoylalanine--D-glutamate ligase">
    <location>
        <begin position="1"/>
        <end position="416"/>
    </location>
</feature>
<feature type="binding site" evidence="1">
    <location>
        <begin position="108"/>
        <end position="114"/>
    </location>
    <ligand>
        <name>ATP</name>
        <dbReference type="ChEBI" id="CHEBI:30616"/>
    </ligand>
</feature>
<reference key="1">
    <citation type="journal article" date="1998" name="Science">
        <title>Genome sequence of an obligate intracellular pathogen of humans: Chlamydia trachomatis.</title>
        <authorList>
            <person name="Stephens R.S."/>
            <person name="Kalman S."/>
            <person name="Lammel C.J."/>
            <person name="Fan J."/>
            <person name="Marathe R."/>
            <person name="Aravind L."/>
            <person name="Mitchell W.P."/>
            <person name="Olinger L."/>
            <person name="Tatusov R.L."/>
            <person name="Zhao Q."/>
            <person name="Koonin E.V."/>
            <person name="Davis R.W."/>
        </authorList>
    </citation>
    <scope>NUCLEOTIDE SEQUENCE [LARGE SCALE GENOMIC DNA]</scope>
    <source>
        <strain>ATCC VR-885 / DSM 19411 / UW-3/Cx</strain>
    </source>
</reference>
<evidence type="ECO:0000255" key="1">
    <source>
        <dbReference type="HAMAP-Rule" id="MF_00639"/>
    </source>
</evidence>
<sequence>MGLERVVVIGLGVSGRSIAHFLAQKGVCVLGVDKSLHALQNCPYIQEKYLENEEFPSQVDYVVRSPGVSKEHPWVQAAIASHIPVMADIQLAFQTEKFTERESLAITGTTGKTTTILFLEYLFKRSGIPAFAMGNVGIPILDGMQNPGVRIVEISSFQLADQEKSYPVLSGGMILNISDNHLDYHGNFSEYFQAKQNLALCMRNPDDLWVGDERFYGHLYLEEVQKYMRLLDKESALKPLYLHDKYNYCCAYLLAKTEFPISETSFIEAVATFNKPPHRMEYLGQKQGIHYINDSKATTVSATETALLGVGNQAIVILGGRNKGCTFSSLLPALRKAAKSVVAMGECAQEIARDLEEFPVTVVKNLSEALLCAEEQAVPGDVIVLSPACASFDQFRSYEERGAMFKQLVGMEEVLL</sequence>
<name>MURD_CHLTR</name>
<protein>
    <recommendedName>
        <fullName evidence="1">UDP-N-acetylmuramoylalanine--D-glutamate ligase</fullName>
        <ecNumber evidence="1">6.3.2.9</ecNumber>
    </recommendedName>
    <alternativeName>
        <fullName evidence="1">D-glutamic acid-adding enzyme</fullName>
    </alternativeName>
    <alternativeName>
        <fullName evidence="1">UDP-N-acetylmuramoyl-L-alanyl-D-glutamate synthetase</fullName>
    </alternativeName>
</protein>